<sequence length="390" mass="42983">MKFVDEATIKVDAGDGGNGVVSFWREKFVAKGGPDGGDGGDGGDVYLEADENLNTLIDYRFNRFYNAERGKNGSGGNCTGKRGEDITLKVPVGTRAIDIDTGEKVAELMTHGMKQMVAKGGWHGLGNTRFKSSVNRAPRQKTLGTKGEVRELRLELLLLADVGMLGLPNAGKSTFIRAVSAAKPKVADYPFTTLIPSLGVVRARGNKSFVVADIPGLIEGAADGAGLGVRFLKHLERCRVLLHVIDILPIDGSDPVQNALTIIDELEQYSEKVAGKPRWLLFNKTDLLLEEEADEKINEILEALAWEDRYFKIAAVSRTGTQELCDELADFMDTLPKEIQTEEEKAANKVDFMWDDYHKDAMSGKDVVTEDDWDDWDDEEDDGHVIYVRD</sequence>
<keyword id="KW-0963">Cytoplasm</keyword>
<keyword id="KW-0342">GTP-binding</keyword>
<keyword id="KW-0378">Hydrolase</keyword>
<keyword id="KW-0460">Magnesium</keyword>
<keyword id="KW-0479">Metal-binding</keyword>
<keyword id="KW-0547">Nucleotide-binding</keyword>
<gene>
    <name evidence="1" type="primary">obg</name>
    <name type="ordered locus">VFMJ11_0268</name>
</gene>
<dbReference type="EC" id="3.6.5.-" evidence="1"/>
<dbReference type="EMBL" id="CP001139">
    <property type="protein sequence ID" value="ACH65156.1"/>
    <property type="molecule type" value="Genomic_DNA"/>
</dbReference>
<dbReference type="RefSeq" id="WP_005417309.1">
    <property type="nucleotide sequence ID" value="NC_011184.1"/>
</dbReference>
<dbReference type="SMR" id="B5FGF9"/>
<dbReference type="KEGG" id="vfm:VFMJ11_0268"/>
<dbReference type="HOGENOM" id="CLU_011747_2_0_6"/>
<dbReference type="Proteomes" id="UP000001857">
    <property type="component" value="Chromosome I"/>
</dbReference>
<dbReference type="GO" id="GO:0005737">
    <property type="term" value="C:cytoplasm"/>
    <property type="evidence" value="ECO:0007669"/>
    <property type="project" value="UniProtKB-SubCell"/>
</dbReference>
<dbReference type="GO" id="GO:0005525">
    <property type="term" value="F:GTP binding"/>
    <property type="evidence" value="ECO:0007669"/>
    <property type="project" value="UniProtKB-UniRule"/>
</dbReference>
<dbReference type="GO" id="GO:0003924">
    <property type="term" value="F:GTPase activity"/>
    <property type="evidence" value="ECO:0007669"/>
    <property type="project" value="UniProtKB-UniRule"/>
</dbReference>
<dbReference type="GO" id="GO:0000287">
    <property type="term" value="F:magnesium ion binding"/>
    <property type="evidence" value="ECO:0007669"/>
    <property type="project" value="InterPro"/>
</dbReference>
<dbReference type="GO" id="GO:0042254">
    <property type="term" value="P:ribosome biogenesis"/>
    <property type="evidence" value="ECO:0007669"/>
    <property type="project" value="UniProtKB-UniRule"/>
</dbReference>
<dbReference type="CDD" id="cd01898">
    <property type="entry name" value="Obg"/>
    <property type="match status" value="1"/>
</dbReference>
<dbReference type="FunFam" id="2.70.210.12:FF:000001">
    <property type="entry name" value="GTPase Obg"/>
    <property type="match status" value="1"/>
</dbReference>
<dbReference type="Gene3D" id="2.70.210.12">
    <property type="entry name" value="GTP1/OBG domain"/>
    <property type="match status" value="1"/>
</dbReference>
<dbReference type="Gene3D" id="3.40.50.300">
    <property type="entry name" value="P-loop containing nucleotide triphosphate hydrolases"/>
    <property type="match status" value="1"/>
</dbReference>
<dbReference type="HAMAP" id="MF_01454">
    <property type="entry name" value="GTPase_Obg"/>
    <property type="match status" value="1"/>
</dbReference>
<dbReference type="InterPro" id="IPR031167">
    <property type="entry name" value="G_OBG"/>
</dbReference>
<dbReference type="InterPro" id="IPR006073">
    <property type="entry name" value="GTP-bd"/>
</dbReference>
<dbReference type="InterPro" id="IPR014100">
    <property type="entry name" value="GTP-bd_Obg/CgtA"/>
</dbReference>
<dbReference type="InterPro" id="IPR006074">
    <property type="entry name" value="GTP1-OBG_CS"/>
</dbReference>
<dbReference type="InterPro" id="IPR006169">
    <property type="entry name" value="GTP1_OBG_dom"/>
</dbReference>
<dbReference type="InterPro" id="IPR036726">
    <property type="entry name" value="GTP1_OBG_dom_sf"/>
</dbReference>
<dbReference type="InterPro" id="IPR045086">
    <property type="entry name" value="OBG_GTPase"/>
</dbReference>
<dbReference type="InterPro" id="IPR027417">
    <property type="entry name" value="P-loop_NTPase"/>
</dbReference>
<dbReference type="NCBIfam" id="TIGR02729">
    <property type="entry name" value="Obg_CgtA"/>
    <property type="match status" value="1"/>
</dbReference>
<dbReference type="NCBIfam" id="NF008955">
    <property type="entry name" value="PRK12297.1"/>
    <property type="match status" value="1"/>
</dbReference>
<dbReference type="NCBIfam" id="NF008956">
    <property type="entry name" value="PRK12299.1"/>
    <property type="match status" value="1"/>
</dbReference>
<dbReference type="PANTHER" id="PTHR11702">
    <property type="entry name" value="DEVELOPMENTALLY REGULATED GTP-BINDING PROTEIN-RELATED"/>
    <property type="match status" value="1"/>
</dbReference>
<dbReference type="PANTHER" id="PTHR11702:SF31">
    <property type="entry name" value="MITOCHONDRIAL RIBOSOME-ASSOCIATED GTPASE 2"/>
    <property type="match status" value="1"/>
</dbReference>
<dbReference type="Pfam" id="PF01018">
    <property type="entry name" value="GTP1_OBG"/>
    <property type="match status" value="1"/>
</dbReference>
<dbReference type="Pfam" id="PF01926">
    <property type="entry name" value="MMR_HSR1"/>
    <property type="match status" value="1"/>
</dbReference>
<dbReference type="PIRSF" id="PIRSF002401">
    <property type="entry name" value="GTP_bd_Obg/CgtA"/>
    <property type="match status" value="1"/>
</dbReference>
<dbReference type="PRINTS" id="PR00326">
    <property type="entry name" value="GTP1OBG"/>
</dbReference>
<dbReference type="SUPFAM" id="SSF82051">
    <property type="entry name" value="Obg GTP-binding protein N-terminal domain"/>
    <property type="match status" value="1"/>
</dbReference>
<dbReference type="SUPFAM" id="SSF52540">
    <property type="entry name" value="P-loop containing nucleoside triphosphate hydrolases"/>
    <property type="match status" value="1"/>
</dbReference>
<dbReference type="PROSITE" id="PS51710">
    <property type="entry name" value="G_OBG"/>
    <property type="match status" value="1"/>
</dbReference>
<dbReference type="PROSITE" id="PS00905">
    <property type="entry name" value="GTP1_OBG"/>
    <property type="match status" value="1"/>
</dbReference>
<dbReference type="PROSITE" id="PS51883">
    <property type="entry name" value="OBG"/>
    <property type="match status" value="1"/>
</dbReference>
<organism>
    <name type="scientific">Aliivibrio fischeri (strain MJ11)</name>
    <name type="common">Vibrio fischeri</name>
    <dbReference type="NCBI Taxonomy" id="388396"/>
    <lineage>
        <taxon>Bacteria</taxon>
        <taxon>Pseudomonadati</taxon>
        <taxon>Pseudomonadota</taxon>
        <taxon>Gammaproteobacteria</taxon>
        <taxon>Vibrionales</taxon>
        <taxon>Vibrionaceae</taxon>
        <taxon>Aliivibrio</taxon>
    </lineage>
</organism>
<reference key="1">
    <citation type="submission" date="2008-08" db="EMBL/GenBank/DDBJ databases">
        <title>Complete sequence of Vibrio fischeri strain MJ11.</title>
        <authorList>
            <person name="Mandel M.J."/>
            <person name="Stabb E.V."/>
            <person name="Ruby E.G."/>
            <person name="Ferriera S."/>
            <person name="Johnson J."/>
            <person name="Kravitz S."/>
            <person name="Beeson K."/>
            <person name="Sutton G."/>
            <person name="Rogers Y.-H."/>
            <person name="Friedman R."/>
            <person name="Frazier M."/>
            <person name="Venter J.C."/>
        </authorList>
    </citation>
    <scope>NUCLEOTIDE SEQUENCE [LARGE SCALE GENOMIC DNA]</scope>
    <source>
        <strain>MJ11</strain>
    </source>
</reference>
<evidence type="ECO:0000255" key="1">
    <source>
        <dbReference type="HAMAP-Rule" id="MF_01454"/>
    </source>
</evidence>
<evidence type="ECO:0000255" key="2">
    <source>
        <dbReference type="PROSITE-ProRule" id="PRU01231"/>
    </source>
</evidence>
<proteinExistence type="inferred from homology"/>
<accession>B5FGF9</accession>
<feature type="chain" id="PRO_0000386379" description="GTPase Obg">
    <location>
        <begin position="1"/>
        <end position="390"/>
    </location>
</feature>
<feature type="domain" description="Obg" evidence="2">
    <location>
        <begin position="1"/>
        <end position="159"/>
    </location>
</feature>
<feature type="domain" description="OBG-type G" evidence="1">
    <location>
        <begin position="160"/>
        <end position="333"/>
    </location>
</feature>
<feature type="binding site" evidence="1">
    <location>
        <begin position="166"/>
        <end position="173"/>
    </location>
    <ligand>
        <name>GTP</name>
        <dbReference type="ChEBI" id="CHEBI:37565"/>
    </ligand>
</feature>
<feature type="binding site" evidence="1">
    <location>
        <position position="173"/>
    </location>
    <ligand>
        <name>Mg(2+)</name>
        <dbReference type="ChEBI" id="CHEBI:18420"/>
    </ligand>
</feature>
<feature type="binding site" evidence="1">
    <location>
        <begin position="191"/>
        <end position="195"/>
    </location>
    <ligand>
        <name>GTP</name>
        <dbReference type="ChEBI" id="CHEBI:37565"/>
    </ligand>
</feature>
<feature type="binding site" evidence="1">
    <location>
        <position position="193"/>
    </location>
    <ligand>
        <name>Mg(2+)</name>
        <dbReference type="ChEBI" id="CHEBI:18420"/>
    </ligand>
</feature>
<feature type="binding site" evidence="1">
    <location>
        <begin position="213"/>
        <end position="216"/>
    </location>
    <ligand>
        <name>GTP</name>
        <dbReference type="ChEBI" id="CHEBI:37565"/>
    </ligand>
</feature>
<feature type="binding site" evidence="1">
    <location>
        <begin position="283"/>
        <end position="286"/>
    </location>
    <ligand>
        <name>GTP</name>
        <dbReference type="ChEBI" id="CHEBI:37565"/>
    </ligand>
</feature>
<feature type="binding site" evidence="1">
    <location>
        <begin position="314"/>
        <end position="316"/>
    </location>
    <ligand>
        <name>GTP</name>
        <dbReference type="ChEBI" id="CHEBI:37565"/>
    </ligand>
</feature>
<protein>
    <recommendedName>
        <fullName evidence="1">GTPase Obg</fullName>
        <ecNumber evidence="1">3.6.5.-</ecNumber>
    </recommendedName>
    <alternativeName>
        <fullName evidence="1">GTP-binding protein Obg</fullName>
    </alternativeName>
</protein>
<name>OBG_ALIFM</name>
<comment type="function">
    <text evidence="1">An essential GTPase which binds GTP, GDP and possibly (p)ppGpp with moderate affinity, with high nucleotide exchange rates and a fairly low GTP hydrolysis rate. Plays a role in control of the cell cycle, stress response, ribosome biogenesis and in those bacteria that undergo differentiation, in morphogenesis control.</text>
</comment>
<comment type="cofactor">
    <cofactor evidence="1">
        <name>Mg(2+)</name>
        <dbReference type="ChEBI" id="CHEBI:18420"/>
    </cofactor>
</comment>
<comment type="subunit">
    <text evidence="1">Monomer.</text>
</comment>
<comment type="subcellular location">
    <subcellularLocation>
        <location evidence="1">Cytoplasm</location>
    </subcellularLocation>
</comment>
<comment type="similarity">
    <text evidence="1">Belongs to the TRAFAC class OBG-HflX-like GTPase superfamily. OBG GTPase family.</text>
</comment>